<evidence type="ECO:0000255" key="1"/>
<evidence type="ECO:0000269" key="2">
    <source>
    </source>
</evidence>
<evidence type="ECO:0000305" key="3"/>
<accession>Q54VL1</accession>
<accession>O96941</accession>
<name>STAB_DICDI</name>
<feature type="signal peptide" evidence="1">
    <location>
        <begin position="1"/>
        <end position="19"/>
    </location>
</feature>
<feature type="chain" id="PRO_0000311886" description="Stalk-specific protein B">
    <location>
        <begin position="20"/>
        <end position="157"/>
    </location>
</feature>
<feature type="sequence conflict" description="In Ref. 1; CAA73552." evidence="3" ref="1">
    <original>S</original>
    <variation>SP</variation>
    <location>
        <position position="43"/>
    </location>
</feature>
<feature type="sequence conflict" description="In Ref. 1; CAA73552." evidence="3" ref="1">
    <original>P</original>
    <variation>Q</variation>
    <location>
        <position position="47"/>
    </location>
</feature>
<feature type="sequence conflict" description="In Ref. 1; CAA73552." evidence="3" ref="1">
    <original>I</original>
    <variation>II</variation>
    <location>
        <position position="89"/>
    </location>
</feature>
<feature type="sequence conflict" description="In Ref. 1; CAA73552." evidence="3" ref="1">
    <original>N</original>
    <variation>NV</variation>
    <location>
        <position position="118"/>
    </location>
</feature>
<feature type="sequence conflict" description="In Ref. 1; CAA73552." evidence="3" ref="1">
    <original>H</original>
    <variation>HMV</variation>
    <location>
        <position position="133"/>
    </location>
</feature>
<feature type="sequence conflict" description="In Ref. 1; CAA73552." evidence="3" ref="1">
    <original>L</original>
    <variation>F</variation>
    <location>
        <position position="140"/>
    </location>
</feature>
<organism>
    <name type="scientific">Dictyostelium discoideum</name>
    <name type="common">Social amoeba</name>
    <dbReference type="NCBI Taxonomy" id="44689"/>
    <lineage>
        <taxon>Eukaryota</taxon>
        <taxon>Amoebozoa</taxon>
        <taxon>Evosea</taxon>
        <taxon>Eumycetozoa</taxon>
        <taxon>Dictyostelia</taxon>
        <taxon>Dictyosteliales</taxon>
        <taxon>Dictyosteliaceae</taxon>
        <taxon>Dictyostelium</taxon>
    </lineage>
</organism>
<proteinExistence type="evidence at transcript level"/>
<dbReference type="EMBL" id="Y13098">
    <property type="protein sequence ID" value="CAA73552.1"/>
    <property type="status" value="ALT_FRAME"/>
    <property type="molecule type" value="mRNA"/>
</dbReference>
<dbReference type="EMBL" id="AAFI02000035">
    <property type="protein sequence ID" value="EAL67363.1"/>
    <property type="molecule type" value="Genomic_DNA"/>
</dbReference>
<dbReference type="RefSeq" id="XP_641344.1">
    <property type="nucleotide sequence ID" value="XM_636252.1"/>
</dbReference>
<dbReference type="FunCoup" id="Q54VL1">
    <property type="interactions" value="427"/>
</dbReference>
<dbReference type="PaxDb" id="44689-DDB0233051"/>
<dbReference type="EnsemblProtists" id="EAL67363">
    <property type="protein sequence ID" value="EAL67363"/>
    <property type="gene ID" value="DDB_G0294499"/>
</dbReference>
<dbReference type="GeneID" id="8622478"/>
<dbReference type="KEGG" id="ddi:DDB_G0294499"/>
<dbReference type="dictyBase" id="DDB_G0294499">
    <property type="gene designation" value="staB"/>
</dbReference>
<dbReference type="VEuPathDB" id="AmoebaDB:DDB_G0294499"/>
<dbReference type="eggNOG" id="ENOG502RHTW">
    <property type="taxonomic scope" value="Eukaryota"/>
</dbReference>
<dbReference type="HOGENOM" id="CLU_117893_0_0_1"/>
<dbReference type="InParanoid" id="Q54VL1"/>
<dbReference type="OMA" id="RQINIRT"/>
<dbReference type="PhylomeDB" id="Q54VL1"/>
<dbReference type="PRO" id="PR:Q54VL1"/>
<dbReference type="Proteomes" id="UP000002195">
    <property type="component" value="Chromosome 3"/>
</dbReference>
<dbReference type="GO" id="GO:0031012">
    <property type="term" value="C:extracellular matrix"/>
    <property type="evidence" value="ECO:0000318"/>
    <property type="project" value="GO_Central"/>
</dbReference>
<dbReference type="GO" id="GO:0005576">
    <property type="term" value="C:extracellular region"/>
    <property type="evidence" value="ECO:0007669"/>
    <property type="project" value="UniProtKB-SubCell"/>
</dbReference>
<dbReference type="GO" id="GO:0005201">
    <property type="term" value="F:extracellular matrix structural constituent"/>
    <property type="evidence" value="ECO:0000318"/>
    <property type="project" value="GO_Central"/>
</dbReference>
<dbReference type="GO" id="GO:0004553">
    <property type="term" value="F:hydrolase activity, hydrolyzing O-glycosyl compounds"/>
    <property type="evidence" value="ECO:0007669"/>
    <property type="project" value="InterPro"/>
</dbReference>
<dbReference type="GO" id="GO:0030247">
    <property type="term" value="F:polysaccharide binding"/>
    <property type="evidence" value="ECO:0007669"/>
    <property type="project" value="InterPro"/>
</dbReference>
<dbReference type="GO" id="GO:0030154">
    <property type="term" value="P:cell differentiation"/>
    <property type="evidence" value="ECO:0007669"/>
    <property type="project" value="UniProtKB-KW"/>
</dbReference>
<dbReference type="GO" id="GO:0030198">
    <property type="term" value="P:extracellular matrix organization"/>
    <property type="evidence" value="ECO:0000318"/>
    <property type="project" value="GO_Central"/>
</dbReference>
<dbReference type="GO" id="GO:0030435">
    <property type="term" value="P:sporulation resulting in formation of a cellular spore"/>
    <property type="evidence" value="ECO:0007669"/>
    <property type="project" value="UniProtKB-KW"/>
</dbReference>
<dbReference type="FunFam" id="2.60.40.290:FF:000002">
    <property type="entry name" value="Stalk-specific protein B"/>
    <property type="match status" value="1"/>
</dbReference>
<dbReference type="Gene3D" id="2.60.40.290">
    <property type="match status" value="1"/>
</dbReference>
<dbReference type="InterPro" id="IPR008965">
    <property type="entry name" value="CBM2/CBM3_carb-bd_dom_sf"/>
</dbReference>
<dbReference type="InterPro" id="IPR012291">
    <property type="entry name" value="CBM2_carb-bd_dom_sf"/>
</dbReference>
<dbReference type="InterPro" id="IPR019028">
    <property type="entry name" value="CBM_49"/>
</dbReference>
<dbReference type="InterPro" id="IPR052879">
    <property type="entry name" value="Dd_Spore_Germination_Stalk"/>
</dbReference>
<dbReference type="PANTHER" id="PTHR33239:SF11">
    <property type="entry name" value="CARBOHYDRATE BINDING DOMAIN-CONTAINING PROTEIN-RELATED"/>
    <property type="match status" value="1"/>
</dbReference>
<dbReference type="PANTHER" id="PTHR33239">
    <property type="entry name" value="CELLULOSE-BINDING DOMAIN-CONTAINING PROTEIN-RELATED"/>
    <property type="match status" value="1"/>
</dbReference>
<dbReference type="Pfam" id="PF09478">
    <property type="entry name" value="CBM49"/>
    <property type="match status" value="1"/>
</dbReference>
<dbReference type="SMART" id="SM01063">
    <property type="entry name" value="CBM49"/>
    <property type="match status" value="1"/>
</dbReference>
<dbReference type="SUPFAM" id="SSF49384">
    <property type="entry name" value="Carbohydrate-binding domain"/>
    <property type="match status" value="1"/>
</dbReference>
<keyword id="KW-0217">Developmental protein</keyword>
<keyword id="KW-0221">Differentiation</keyword>
<keyword id="KW-1185">Reference proteome</keyword>
<keyword id="KW-0964">Secreted</keyword>
<keyword id="KW-0732">Signal</keyword>
<keyword id="KW-0749">Sporulation</keyword>
<reference key="1">
    <citation type="journal article" date="1997" name="Differentiation">
        <title>A marker of terminal stalk cell terminal differentiation in Dictyostelium.</title>
        <authorList>
            <person name="Robinson V."/>
            <person name="Williams J."/>
        </authorList>
    </citation>
    <scope>NUCLEOTIDE SEQUENCE [MRNA]</scope>
    <scope>DEVELOPMENTAL STAGE</scope>
    <source>
        <strain>AX2</strain>
    </source>
</reference>
<reference key="2">
    <citation type="journal article" date="2005" name="Nature">
        <title>The genome of the social amoeba Dictyostelium discoideum.</title>
        <authorList>
            <person name="Eichinger L."/>
            <person name="Pachebat J.A."/>
            <person name="Gloeckner G."/>
            <person name="Rajandream M.A."/>
            <person name="Sucgang R."/>
            <person name="Berriman M."/>
            <person name="Song J."/>
            <person name="Olsen R."/>
            <person name="Szafranski K."/>
            <person name="Xu Q."/>
            <person name="Tunggal B."/>
            <person name="Kummerfeld S."/>
            <person name="Madera M."/>
            <person name="Konfortov B.A."/>
            <person name="Rivero F."/>
            <person name="Bankier A.T."/>
            <person name="Lehmann R."/>
            <person name="Hamlin N."/>
            <person name="Davies R."/>
            <person name="Gaudet P."/>
            <person name="Fey P."/>
            <person name="Pilcher K."/>
            <person name="Chen G."/>
            <person name="Saunders D."/>
            <person name="Sodergren E.J."/>
            <person name="Davis P."/>
            <person name="Kerhornou A."/>
            <person name="Nie X."/>
            <person name="Hall N."/>
            <person name="Anjard C."/>
            <person name="Hemphill L."/>
            <person name="Bason N."/>
            <person name="Farbrother P."/>
            <person name="Desany B."/>
            <person name="Just E."/>
            <person name="Morio T."/>
            <person name="Rost R."/>
            <person name="Churcher C.M."/>
            <person name="Cooper J."/>
            <person name="Haydock S."/>
            <person name="van Driessche N."/>
            <person name="Cronin A."/>
            <person name="Goodhead I."/>
            <person name="Muzny D.M."/>
            <person name="Mourier T."/>
            <person name="Pain A."/>
            <person name="Lu M."/>
            <person name="Harper D."/>
            <person name="Lindsay R."/>
            <person name="Hauser H."/>
            <person name="James K.D."/>
            <person name="Quiles M."/>
            <person name="Madan Babu M."/>
            <person name="Saito T."/>
            <person name="Buchrieser C."/>
            <person name="Wardroper A."/>
            <person name="Felder M."/>
            <person name="Thangavelu M."/>
            <person name="Johnson D."/>
            <person name="Knights A."/>
            <person name="Loulseged H."/>
            <person name="Mungall K.L."/>
            <person name="Oliver K."/>
            <person name="Price C."/>
            <person name="Quail M.A."/>
            <person name="Urushihara H."/>
            <person name="Hernandez J."/>
            <person name="Rabbinowitsch E."/>
            <person name="Steffen D."/>
            <person name="Sanders M."/>
            <person name="Ma J."/>
            <person name="Kohara Y."/>
            <person name="Sharp S."/>
            <person name="Simmonds M.N."/>
            <person name="Spiegler S."/>
            <person name="Tivey A."/>
            <person name="Sugano S."/>
            <person name="White B."/>
            <person name="Walker D."/>
            <person name="Woodward J.R."/>
            <person name="Winckler T."/>
            <person name="Tanaka Y."/>
            <person name="Shaulsky G."/>
            <person name="Schleicher M."/>
            <person name="Weinstock G.M."/>
            <person name="Rosenthal A."/>
            <person name="Cox E.C."/>
            <person name="Chisholm R.L."/>
            <person name="Gibbs R.A."/>
            <person name="Loomis W.F."/>
            <person name="Platzer M."/>
            <person name="Kay R.R."/>
            <person name="Williams J.G."/>
            <person name="Dear P.H."/>
            <person name="Noegel A.A."/>
            <person name="Barrell B.G."/>
            <person name="Kuspa A."/>
        </authorList>
    </citation>
    <scope>NUCLEOTIDE SEQUENCE [LARGE SCALE GENOMIC DNA]</scope>
    <source>
        <strain>AX4</strain>
    </source>
</reference>
<protein>
    <recommendedName>
        <fullName>Stalk-specific protein B</fullName>
    </recommendedName>
</protein>
<comment type="subcellular location">
    <subcellularLocation>
        <location evidence="3">Secreted</location>
    </subcellularLocation>
</comment>
<comment type="developmental stage">
    <text evidence="2">Selectively expressed in stalk cells. If an aggregate enters culmination immediately it is expressed in the bottom half of the stalk and in the basal disk but if a migratory slug is formed it is also expressed in the top of the stalk and in a disk of cells that surmounts the spore head.</text>
</comment>
<comment type="sequence caution" evidence="3">
    <conflict type="frameshift">
        <sequence resource="EMBL-CDS" id="CAA73552"/>
    </conflict>
</comment>
<sequence length="157" mass="17375">MRSILILLSLLLTIAFASASFPYQCGPYSCQFGQVCRIDNGVSNCIPINDCHEVSLSTKVVGTWVDGSRGNKRFTQYDITITNNLNTNIKQIYIATDYTLRLRDHSNNSIWNVNLLPNGILTLPSYQPSINAHASFTFGLIIEGTQPANLNVLSVSF</sequence>
<gene>
    <name type="primary">staB</name>
    <name type="ORF">DDB_G0294499</name>
</gene>